<gene>
    <name evidence="1" type="primary">plsX</name>
    <name type="ordered locus">EF_3112</name>
</gene>
<reference key="1">
    <citation type="journal article" date="2003" name="Science">
        <title>Role of mobile DNA in the evolution of vancomycin-resistant Enterococcus faecalis.</title>
        <authorList>
            <person name="Paulsen I.T."/>
            <person name="Banerjei L."/>
            <person name="Myers G.S.A."/>
            <person name="Nelson K.E."/>
            <person name="Seshadri R."/>
            <person name="Read T.D."/>
            <person name="Fouts D.E."/>
            <person name="Eisen J.A."/>
            <person name="Gill S.R."/>
            <person name="Heidelberg J.F."/>
            <person name="Tettelin H."/>
            <person name="Dodson R.J."/>
            <person name="Umayam L.A."/>
            <person name="Brinkac L.M."/>
            <person name="Beanan M.J."/>
            <person name="Daugherty S.C."/>
            <person name="DeBoy R.T."/>
            <person name="Durkin S.A."/>
            <person name="Kolonay J.F."/>
            <person name="Madupu R."/>
            <person name="Nelson W.C."/>
            <person name="Vamathevan J.J."/>
            <person name="Tran B."/>
            <person name="Upton J."/>
            <person name="Hansen T."/>
            <person name="Shetty J."/>
            <person name="Khouri H.M."/>
            <person name="Utterback T.R."/>
            <person name="Radune D."/>
            <person name="Ketchum K.A."/>
            <person name="Dougherty B.A."/>
            <person name="Fraser C.M."/>
        </authorList>
    </citation>
    <scope>NUCLEOTIDE SEQUENCE [LARGE SCALE GENOMIC DNA]</scope>
    <source>
        <strain>ATCC 700802 / V583</strain>
    </source>
</reference>
<reference key="2">
    <citation type="journal article" date="2009" name="J. Struct. Funct. Genomics">
        <title>Crystal structure of fatty acid/phospholipid synthesis protein PlsX from Enterococcus faecalis.</title>
        <authorList>
            <person name="Kim Y."/>
            <person name="Li H."/>
            <person name="Binkowski T.A."/>
            <person name="Holzle D."/>
            <person name="Joachimiak A."/>
        </authorList>
    </citation>
    <scope>X-RAY CRYSTALLOGRAPHY (2.26 ANGSTROMS)</scope>
    <scope>SUBUNIT</scope>
</reference>
<keyword id="KW-0002">3D-structure</keyword>
<keyword id="KW-0963">Cytoplasm</keyword>
<keyword id="KW-0444">Lipid biosynthesis</keyword>
<keyword id="KW-0443">Lipid metabolism</keyword>
<keyword id="KW-0594">Phospholipid biosynthesis</keyword>
<keyword id="KW-1208">Phospholipid metabolism</keyword>
<keyword id="KW-1185">Reference proteome</keyword>
<keyword id="KW-0808">Transferase</keyword>
<protein>
    <recommendedName>
        <fullName evidence="1">Phosphate acyltransferase</fullName>
        <ecNumber evidence="1">2.3.1.274</ecNumber>
    </recommendedName>
    <alternativeName>
        <fullName evidence="1">Acyl-ACP phosphotransacylase</fullName>
    </alternativeName>
    <alternativeName>
        <fullName evidence="1">Acyl-[acyl-carrier-protein]--phosphate acyltransferase</fullName>
    </alternativeName>
    <alternativeName>
        <fullName evidence="1">Phosphate-acyl-ACP acyltransferase</fullName>
    </alternativeName>
</protein>
<name>PLSX_ENTFA</name>
<comment type="function">
    <text evidence="1">Catalyzes the reversible formation of acyl-phosphate (acyl-PO(4)) from acyl-[acyl-carrier-protein] (acyl-ACP). This enzyme utilizes acyl-ACP as fatty acyl donor, but not acyl-CoA.</text>
</comment>
<comment type="catalytic activity">
    <reaction evidence="1">
        <text>a fatty acyl-[ACP] + phosphate = an acyl phosphate + holo-[ACP]</text>
        <dbReference type="Rhea" id="RHEA:42292"/>
        <dbReference type="Rhea" id="RHEA-COMP:9685"/>
        <dbReference type="Rhea" id="RHEA-COMP:14125"/>
        <dbReference type="ChEBI" id="CHEBI:43474"/>
        <dbReference type="ChEBI" id="CHEBI:59918"/>
        <dbReference type="ChEBI" id="CHEBI:64479"/>
        <dbReference type="ChEBI" id="CHEBI:138651"/>
        <dbReference type="EC" id="2.3.1.274"/>
    </reaction>
</comment>
<comment type="pathway">
    <text evidence="1">Lipid metabolism; phospholipid metabolism.</text>
</comment>
<comment type="subunit">
    <text evidence="1 2">Homodimer. Probably interacts with PlsY.</text>
</comment>
<comment type="subcellular location">
    <subcellularLocation>
        <location evidence="1">Cytoplasm</location>
    </subcellularLocation>
    <text evidence="1">Associated with the membrane possibly through PlsY.</text>
</comment>
<comment type="similarity">
    <text evidence="1">Belongs to the PlsX family.</text>
</comment>
<accession>Q82ZE8</accession>
<organism>
    <name type="scientific">Enterococcus faecalis (strain ATCC 700802 / V583)</name>
    <dbReference type="NCBI Taxonomy" id="226185"/>
    <lineage>
        <taxon>Bacteria</taxon>
        <taxon>Bacillati</taxon>
        <taxon>Bacillota</taxon>
        <taxon>Bacilli</taxon>
        <taxon>Lactobacillales</taxon>
        <taxon>Enterococcaceae</taxon>
        <taxon>Enterococcus</taxon>
    </lineage>
</organism>
<feature type="chain" id="PRO_0000189878" description="Phosphate acyltransferase">
    <location>
        <begin position="1"/>
        <end position="333"/>
    </location>
</feature>
<feature type="strand" evidence="3">
    <location>
        <begin position="2"/>
        <end position="8"/>
    </location>
</feature>
<feature type="turn" evidence="3">
    <location>
        <begin position="11"/>
        <end position="14"/>
    </location>
</feature>
<feature type="helix" evidence="3">
    <location>
        <begin position="15"/>
        <end position="27"/>
    </location>
</feature>
<feature type="strand" evidence="3">
    <location>
        <begin position="32"/>
        <end position="37"/>
    </location>
</feature>
<feature type="helix" evidence="3">
    <location>
        <begin position="39"/>
        <end position="43"/>
    </location>
</feature>
<feature type="strand" evidence="3">
    <location>
        <begin position="52"/>
        <end position="56"/>
    </location>
</feature>
<feature type="helix" evidence="3">
    <location>
        <begin position="67"/>
        <end position="73"/>
    </location>
</feature>
<feature type="helix" evidence="3">
    <location>
        <begin position="78"/>
        <end position="87"/>
    </location>
</feature>
<feature type="strand" evidence="3">
    <location>
        <begin position="92"/>
        <end position="98"/>
    </location>
</feature>
<feature type="helix" evidence="3">
    <location>
        <begin position="100"/>
        <end position="109"/>
    </location>
</feature>
<feature type="strand" evidence="3">
    <location>
        <begin position="121"/>
        <end position="127"/>
    </location>
</feature>
<feature type="strand" evidence="3">
    <location>
        <begin position="135"/>
        <end position="139"/>
    </location>
</feature>
<feature type="strand" evidence="3">
    <location>
        <begin position="141"/>
        <end position="143"/>
    </location>
</feature>
<feature type="helix" evidence="3">
    <location>
        <begin position="149"/>
        <end position="165"/>
    </location>
</feature>
<feature type="strand" evidence="3">
    <location>
        <begin position="174"/>
        <end position="177"/>
    </location>
</feature>
<feature type="strand" evidence="3">
    <location>
        <begin position="182"/>
        <end position="184"/>
    </location>
</feature>
<feature type="helix" evidence="3">
    <location>
        <begin position="188"/>
        <end position="199"/>
    </location>
</feature>
<feature type="strand" evidence="3">
    <location>
        <begin position="205"/>
        <end position="209"/>
    </location>
</feature>
<feature type="helix" evidence="3">
    <location>
        <begin position="211"/>
        <end position="216"/>
    </location>
</feature>
<feature type="strand" evidence="3">
    <location>
        <begin position="220"/>
        <end position="223"/>
    </location>
</feature>
<feature type="helix" evidence="3">
    <location>
        <begin position="226"/>
        <end position="251"/>
    </location>
</feature>
<feature type="helix" evidence="3">
    <location>
        <begin position="262"/>
        <end position="275"/>
    </location>
</feature>
<feature type="helix" evidence="3">
    <location>
        <begin position="278"/>
        <end position="281"/>
    </location>
</feature>
<feature type="strand" evidence="3">
    <location>
        <begin position="284"/>
        <end position="287"/>
    </location>
</feature>
<feature type="strand" evidence="3">
    <location>
        <begin position="289"/>
        <end position="291"/>
    </location>
</feature>
<feature type="strand" evidence="3">
    <location>
        <begin position="293"/>
        <end position="295"/>
    </location>
</feature>
<feature type="helix" evidence="3">
    <location>
        <begin position="302"/>
        <end position="317"/>
    </location>
</feature>
<feature type="helix" evidence="3">
    <location>
        <begin position="320"/>
        <end position="328"/>
    </location>
</feature>
<dbReference type="EC" id="2.3.1.274" evidence="1"/>
<dbReference type="EMBL" id="AE016830">
    <property type="protein sequence ID" value="AAO82792.1"/>
    <property type="molecule type" value="Genomic_DNA"/>
</dbReference>
<dbReference type="RefSeq" id="NP_816722.1">
    <property type="nucleotide sequence ID" value="NC_004668.1"/>
</dbReference>
<dbReference type="RefSeq" id="WP_002387382.1">
    <property type="nucleotide sequence ID" value="NZ_KE136524.1"/>
</dbReference>
<dbReference type="PDB" id="1U7N">
    <property type="method" value="X-ray"/>
    <property type="resolution" value="2.26 A"/>
    <property type="chains" value="A/B=1-333"/>
</dbReference>
<dbReference type="PDBsum" id="1U7N"/>
<dbReference type="SMR" id="Q82ZE8"/>
<dbReference type="STRING" id="226185.EF_3112"/>
<dbReference type="EnsemblBacteria" id="AAO82792">
    <property type="protein sequence ID" value="AAO82792"/>
    <property type="gene ID" value="EF_3112"/>
</dbReference>
<dbReference type="KEGG" id="efa:EF3112"/>
<dbReference type="PATRIC" id="fig|226185.45.peg.461"/>
<dbReference type="eggNOG" id="COG0416">
    <property type="taxonomic scope" value="Bacteria"/>
</dbReference>
<dbReference type="HOGENOM" id="CLU_039379_1_1_9"/>
<dbReference type="BRENDA" id="2.3.1.274">
    <property type="organism ID" value="2095"/>
</dbReference>
<dbReference type="UniPathway" id="UPA00085"/>
<dbReference type="EvolutionaryTrace" id="Q82ZE8"/>
<dbReference type="Proteomes" id="UP000001415">
    <property type="component" value="Chromosome"/>
</dbReference>
<dbReference type="GO" id="GO:0005737">
    <property type="term" value="C:cytoplasm"/>
    <property type="evidence" value="ECO:0007669"/>
    <property type="project" value="UniProtKB-SubCell"/>
</dbReference>
<dbReference type="GO" id="GO:0043811">
    <property type="term" value="F:phosphate:acyl-[acyl carrier protein] acyltransferase activity"/>
    <property type="evidence" value="ECO:0007669"/>
    <property type="project" value="UniProtKB-UniRule"/>
</dbReference>
<dbReference type="GO" id="GO:0006633">
    <property type="term" value="P:fatty acid biosynthetic process"/>
    <property type="evidence" value="ECO:0007669"/>
    <property type="project" value="UniProtKB-UniRule"/>
</dbReference>
<dbReference type="GO" id="GO:0008654">
    <property type="term" value="P:phospholipid biosynthetic process"/>
    <property type="evidence" value="ECO:0007669"/>
    <property type="project" value="UniProtKB-KW"/>
</dbReference>
<dbReference type="Gene3D" id="3.40.718.10">
    <property type="entry name" value="Isopropylmalate Dehydrogenase"/>
    <property type="match status" value="1"/>
</dbReference>
<dbReference type="HAMAP" id="MF_00019">
    <property type="entry name" value="PlsX"/>
    <property type="match status" value="1"/>
</dbReference>
<dbReference type="InterPro" id="IPR003664">
    <property type="entry name" value="FA_synthesis"/>
</dbReference>
<dbReference type="InterPro" id="IPR012281">
    <property type="entry name" value="Phospholipid_synth_PlsX-like"/>
</dbReference>
<dbReference type="NCBIfam" id="TIGR00182">
    <property type="entry name" value="plsX"/>
    <property type="match status" value="1"/>
</dbReference>
<dbReference type="PANTHER" id="PTHR30100">
    <property type="entry name" value="FATTY ACID/PHOSPHOLIPID SYNTHESIS PROTEIN PLSX"/>
    <property type="match status" value="1"/>
</dbReference>
<dbReference type="PANTHER" id="PTHR30100:SF1">
    <property type="entry name" value="PHOSPHATE ACYLTRANSFERASE"/>
    <property type="match status" value="1"/>
</dbReference>
<dbReference type="Pfam" id="PF02504">
    <property type="entry name" value="FA_synthesis"/>
    <property type="match status" value="1"/>
</dbReference>
<dbReference type="PIRSF" id="PIRSF002465">
    <property type="entry name" value="Phsphlp_syn_PlsX"/>
    <property type="match status" value="1"/>
</dbReference>
<dbReference type="SUPFAM" id="SSF53659">
    <property type="entry name" value="Isocitrate/Isopropylmalate dehydrogenase-like"/>
    <property type="match status" value="1"/>
</dbReference>
<sequence length="333" mass="35835">MKIAVDAMGGDNAPQAIVEGVMLAKQDFPDIEFQLYGKEAEIKKYITDEKNITIIHTDEKIASDDEPVKAIRRKKTASMVLAAQAVKNGEADAIFSAGNTGALLAAGLFIVGRIKNVERPGLMSTLPVMGEPDKGFDMLDLGANADNKPEHLVQYAVLGSFYAEKVRNVQNPRVGLLNNGTEETKGSELTKKAFELLAADETINFVGNVEARELLNGVADVVVTDGFTGNAVLKSIEGTAMNMMSLLKTAILSEGVKGKMGALLLKNALHGMKDEMDYSKHGGAVLFGLKAPVIKTHGATGPDAVRYTIRQIHTMLETQVVPQLVEYYEGKAE</sequence>
<evidence type="ECO:0000255" key="1">
    <source>
        <dbReference type="HAMAP-Rule" id="MF_00019"/>
    </source>
</evidence>
<evidence type="ECO:0000269" key="2">
    <source>
    </source>
</evidence>
<evidence type="ECO:0007829" key="3">
    <source>
        <dbReference type="PDB" id="1U7N"/>
    </source>
</evidence>
<proteinExistence type="evidence at protein level"/>